<accession>P0CQ12</accession>
<accession>Q00826</accession>
<accession>Q55WC0</accession>
<accession>Q5KJX9</accession>
<protein>
    <recommendedName>
        <fullName>Probable proteasome subunit beta type-4</fullName>
    </recommendedName>
</protein>
<name>PSB4_CRYNJ</name>
<feature type="chain" id="PRO_0000148052" description="Probable proteasome subunit beta type-4">
    <location>
        <begin position="1"/>
        <end position="224"/>
    </location>
</feature>
<comment type="function">
    <text evidence="1">Non-catalytic component of the proteasome, a multicatalytic proteinase complex which is characterized by its ability to cleave peptides with Arg, Phe, Tyr, Leu, and Glu adjacent to the leaving group at neutral or slightly basic pH. The proteasome has an ATP-dependent proteolytic activity (By similarity).</text>
</comment>
<comment type="subunit">
    <text evidence="1">The 26S proteasome consists of a 20S proteasome core and two 19S regulatory subunits. The 20S proteasome core is composed of 28 subunits that are arranged in four stacked rings, resulting in a barrel-shaped structure. The two end rings are each formed by seven alpha subunits, and the two central rings are each formed by seven beta subunits. The catalytic chamber with the active sites is on the inside of the barrel (By similarity).</text>
</comment>
<comment type="subcellular location">
    <subcellularLocation>
        <location evidence="2">Cytoplasm</location>
    </subcellularLocation>
    <subcellularLocation>
        <location evidence="1">Nucleus</location>
    </subcellularLocation>
</comment>
<comment type="similarity">
    <text evidence="2">Belongs to the peptidase T1B family.</text>
</comment>
<gene>
    <name type="primary">CPR1</name>
    <name type="ordered locus">CNC04990</name>
</gene>
<dbReference type="EMBL" id="L40028">
    <property type="protein sequence ID" value="AAB06582.1"/>
    <property type="molecule type" value="Genomic_DNA"/>
</dbReference>
<dbReference type="EMBL" id="AE017343">
    <property type="protein sequence ID" value="AAW42482.1"/>
    <property type="molecule type" value="Genomic_DNA"/>
</dbReference>
<dbReference type="RefSeq" id="XP_569789.1">
    <property type="nucleotide sequence ID" value="XM_569789.1"/>
</dbReference>
<dbReference type="SMR" id="P0CQ12"/>
<dbReference type="FunCoup" id="P0CQ12">
    <property type="interactions" value="508"/>
</dbReference>
<dbReference type="STRING" id="214684.P0CQ12"/>
<dbReference type="PaxDb" id="214684-P0CQ12"/>
<dbReference type="EnsemblFungi" id="AAW42482">
    <property type="protein sequence ID" value="AAW42482"/>
    <property type="gene ID" value="CNC04990"/>
</dbReference>
<dbReference type="GeneID" id="3256830"/>
<dbReference type="KEGG" id="cne:CNC04990"/>
<dbReference type="VEuPathDB" id="FungiDB:CNC04990"/>
<dbReference type="eggNOG" id="KOG0177">
    <property type="taxonomic scope" value="Eukaryota"/>
</dbReference>
<dbReference type="HOGENOM" id="CLU_035750_12_1_1"/>
<dbReference type="InParanoid" id="P0CQ12"/>
<dbReference type="OMA" id="MKRDHDK"/>
<dbReference type="OrthoDB" id="268428at2759"/>
<dbReference type="Proteomes" id="UP000002149">
    <property type="component" value="Chromosome 3"/>
</dbReference>
<dbReference type="GO" id="GO:0005829">
    <property type="term" value="C:cytosol"/>
    <property type="evidence" value="ECO:0000318"/>
    <property type="project" value="GO_Central"/>
</dbReference>
<dbReference type="GO" id="GO:0005789">
    <property type="term" value="C:endoplasmic reticulum membrane"/>
    <property type="evidence" value="ECO:0007669"/>
    <property type="project" value="EnsemblFungi"/>
</dbReference>
<dbReference type="GO" id="GO:0005634">
    <property type="term" value="C:nucleus"/>
    <property type="evidence" value="ECO:0000318"/>
    <property type="project" value="GO_Central"/>
</dbReference>
<dbReference type="GO" id="GO:0019774">
    <property type="term" value="C:proteasome core complex, beta-subunit complex"/>
    <property type="evidence" value="ECO:0000318"/>
    <property type="project" value="GO_Central"/>
</dbReference>
<dbReference type="GO" id="GO:0061133">
    <property type="term" value="F:endopeptidase activator activity"/>
    <property type="evidence" value="ECO:0007669"/>
    <property type="project" value="EnsemblFungi"/>
</dbReference>
<dbReference type="GO" id="GO:0010499">
    <property type="term" value="P:proteasomal ubiquitin-independent protein catabolic process"/>
    <property type="evidence" value="ECO:0007669"/>
    <property type="project" value="EnsemblFungi"/>
</dbReference>
<dbReference type="GO" id="GO:0043161">
    <property type="term" value="P:proteasome-mediated ubiquitin-dependent protein catabolic process"/>
    <property type="evidence" value="ECO:0000318"/>
    <property type="project" value="GO_Central"/>
</dbReference>
<dbReference type="CDD" id="cd03758">
    <property type="entry name" value="proteasome_beta_type_2"/>
    <property type="match status" value="1"/>
</dbReference>
<dbReference type="FunFam" id="3.60.20.10:FF:000008">
    <property type="entry name" value="Proteasome subunit beta type-4"/>
    <property type="match status" value="1"/>
</dbReference>
<dbReference type="Gene3D" id="3.60.20.10">
    <property type="entry name" value="Glutamine Phosphoribosylpyrophosphate, subunit 1, domain 1"/>
    <property type="match status" value="1"/>
</dbReference>
<dbReference type="InterPro" id="IPR029055">
    <property type="entry name" value="Ntn_hydrolases_N"/>
</dbReference>
<dbReference type="InterPro" id="IPR035206">
    <property type="entry name" value="Proteasome_beta2"/>
</dbReference>
<dbReference type="InterPro" id="IPR016050">
    <property type="entry name" value="Proteasome_bsu_CS"/>
</dbReference>
<dbReference type="InterPro" id="IPR001353">
    <property type="entry name" value="Proteasome_sua/b"/>
</dbReference>
<dbReference type="InterPro" id="IPR023333">
    <property type="entry name" value="Proteasome_suB-type"/>
</dbReference>
<dbReference type="PANTHER" id="PTHR32194">
    <property type="entry name" value="METALLOPROTEASE TLDD"/>
    <property type="match status" value="1"/>
</dbReference>
<dbReference type="PANTHER" id="PTHR32194:SF2">
    <property type="entry name" value="PROTEASOME SUBUNIT BETA TYPE-1"/>
    <property type="match status" value="1"/>
</dbReference>
<dbReference type="Pfam" id="PF00227">
    <property type="entry name" value="Proteasome"/>
    <property type="match status" value="1"/>
</dbReference>
<dbReference type="SUPFAM" id="SSF56235">
    <property type="entry name" value="N-terminal nucleophile aminohydrolases (Ntn hydrolases)"/>
    <property type="match status" value="1"/>
</dbReference>
<dbReference type="PROSITE" id="PS00854">
    <property type="entry name" value="PROTEASOME_BETA_1"/>
    <property type="match status" value="1"/>
</dbReference>
<dbReference type="PROSITE" id="PS51476">
    <property type="entry name" value="PROTEASOME_BETA_2"/>
    <property type="match status" value="1"/>
</dbReference>
<keyword id="KW-0963">Cytoplasm</keyword>
<keyword id="KW-0539">Nucleus</keyword>
<keyword id="KW-0647">Proteasome</keyword>
<keyword id="KW-1185">Reference proteome</keyword>
<proteinExistence type="inferred from homology"/>
<sequence>MECSFGITGKDYVILASDMGAGRSIVRMKSDENKLKTLGPHLAMAFSGEPGDTNNFAEYIERNMRLYNIRNHFPLLPPAASAWVRRTLAEAIRSRHPYAVNLLLGGFDTTTSKPHLYWIDYLGTKAIVPYAAHGMGVYVSLSTMDKWWYEDMDKKEGVDLLRKCIDETEKRLTIKFDFNCILIDKNGIHKVDLSQADPIANIQEHPQETEVEAPHPPIEVGISA</sequence>
<organism>
    <name type="scientific">Cryptococcus neoformans var. neoformans serotype D (strain JEC21 / ATCC MYA-565)</name>
    <name type="common">Filobasidiella neoformans</name>
    <dbReference type="NCBI Taxonomy" id="214684"/>
    <lineage>
        <taxon>Eukaryota</taxon>
        <taxon>Fungi</taxon>
        <taxon>Dikarya</taxon>
        <taxon>Basidiomycota</taxon>
        <taxon>Agaricomycotina</taxon>
        <taxon>Tremellomycetes</taxon>
        <taxon>Tremellales</taxon>
        <taxon>Cryptococcaceae</taxon>
        <taxon>Cryptococcus</taxon>
        <taxon>Cryptococcus neoformans species complex</taxon>
    </lineage>
</organism>
<reference key="1">
    <citation type="journal article" date="1996" name="Infect. Immun.">
        <title>The second capsule gene of Cryptococcus neoformans, CAP64, is essential for virulence.</title>
        <authorList>
            <person name="Chang Y.C."/>
            <person name="Penoyer L.A."/>
            <person name="Kwon-Chung K.J."/>
        </authorList>
    </citation>
    <scope>NUCLEOTIDE SEQUENCE [GENOMIC DNA]</scope>
</reference>
<reference key="2">
    <citation type="journal article" date="2005" name="Science">
        <title>The genome of the basidiomycetous yeast and human pathogen Cryptococcus neoformans.</title>
        <authorList>
            <person name="Loftus B.J."/>
            <person name="Fung E."/>
            <person name="Roncaglia P."/>
            <person name="Rowley D."/>
            <person name="Amedeo P."/>
            <person name="Bruno D."/>
            <person name="Vamathevan J."/>
            <person name="Miranda M."/>
            <person name="Anderson I.J."/>
            <person name="Fraser J.A."/>
            <person name="Allen J.E."/>
            <person name="Bosdet I.E."/>
            <person name="Brent M.R."/>
            <person name="Chiu R."/>
            <person name="Doering T.L."/>
            <person name="Donlin M.J."/>
            <person name="D'Souza C.A."/>
            <person name="Fox D.S."/>
            <person name="Grinberg V."/>
            <person name="Fu J."/>
            <person name="Fukushima M."/>
            <person name="Haas B.J."/>
            <person name="Huang J.C."/>
            <person name="Janbon G."/>
            <person name="Jones S.J.M."/>
            <person name="Koo H.L."/>
            <person name="Krzywinski M.I."/>
            <person name="Kwon-Chung K.J."/>
            <person name="Lengeler K.B."/>
            <person name="Maiti R."/>
            <person name="Marra M.A."/>
            <person name="Marra R.E."/>
            <person name="Mathewson C.A."/>
            <person name="Mitchell T.G."/>
            <person name="Pertea M."/>
            <person name="Riggs F.R."/>
            <person name="Salzberg S.L."/>
            <person name="Schein J.E."/>
            <person name="Shvartsbeyn A."/>
            <person name="Shin H."/>
            <person name="Shumway M."/>
            <person name="Specht C.A."/>
            <person name="Suh B.B."/>
            <person name="Tenney A."/>
            <person name="Utterback T.R."/>
            <person name="Wickes B.L."/>
            <person name="Wortman J.R."/>
            <person name="Wye N.H."/>
            <person name="Kronstad J.W."/>
            <person name="Lodge J.K."/>
            <person name="Heitman J."/>
            <person name="Davis R.W."/>
            <person name="Fraser C.M."/>
            <person name="Hyman R.W."/>
        </authorList>
    </citation>
    <scope>NUCLEOTIDE SEQUENCE [LARGE SCALE GENOMIC DNA]</scope>
    <source>
        <strain>JEC21 / ATCC MYA-565</strain>
    </source>
</reference>
<evidence type="ECO:0000250" key="1"/>
<evidence type="ECO:0000255" key="2">
    <source>
        <dbReference type="PROSITE-ProRule" id="PRU00809"/>
    </source>
</evidence>